<evidence type="ECO:0000250" key="1"/>
<evidence type="ECO:0000255" key="2"/>
<evidence type="ECO:0000305" key="3"/>
<reference key="1">
    <citation type="journal article" date="2005" name="Proc. Natl. Acad. Sci. U.S.A.">
        <title>Loblolly pine abietadienol/abietadienal oxidase PtAO (CYP720B1) is a multifunctional, multisubstrate cytochrome P450 monooxygenase.</title>
        <authorList>
            <person name="Ro D.-K."/>
            <person name="Arimura G."/>
            <person name="Lau S.Y.W."/>
            <person name="Piers E."/>
            <person name="Bohlmann J."/>
        </authorList>
    </citation>
    <scope>NUCLEOTIDE SEQUENCE [MRNA]</scope>
</reference>
<organism>
    <name type="scientific">Pinus taeda</name>
    <name type="common">Loblolly pine</name>
    <dbReference type="NCBI Taxonomy" id="3352"/>
    <lineage>
        <taxon>Eukaryota</taxon>
        <taxon>Viridiplantae</taxon>
        <taxon>Streptophyta</taxon>
        <taxon>Embryophyta</taxon>
        <taxon>Tracheophyta</taxon>
        <taxon>Spermatophyta</taxon>
        <taxon>Pinopsida</taxon>
        <taxon>Pinidae</taxon>
        <taxon>Conifers I</taxon>
        <taxon>Pinales</taxon>
        <taxon>Pinaceae</taxon>
        <taxon>Pinus</taxon>
        <taxon>Pinus subgen. Pinus</taxon>
    </lineage>
</organism>
<dbReference type="EC" id="1.14.-.-"/>
<dbReference type="EMBL" id="AY779538">
    <property type="protein sequence ID" value="AAX07432.1"/>
    <property type="molecule type" value="mRNA"/>
</dbReference>
<dbReference type="SMR" id="Q50EK5"/>
<dbReference type="BRENDA" id="1.14.14.145">
    <property type="organism ID" value="4861"/>
</dbReference>
<dbReference type="GO" id="GO:0016020">
    <property type="term" value="C:membrane"/>
    <property type="evidence" value="ECO:0007669"/>
    <property type="project" value="UniProtKB-SubCell"/>
</dbReference>
<dbReference type="GO" id="GO:0020037">
    <property type="term" value="F:heme binding"/>
    <property type="evidence" value="ECO:0007669"/>
    <property type="project" value="InterPro"/>
</dbReference>
<dbReference type="GO" id="GO:0005506">
    <property type="term" value="F:iron ion binding"/>
    <property type="evidence" value="ECO:0007669"/>
    <property type="project" value="InterPro"/>
</dbReference>
<dbReference type="GO" id="GO:0004497">
    <property type="term" value="F:monooxygenase activity"/>
    <property type="evidence" value="ECO:0007669"/>
    <property type="project" value="UniProtKB-KW"/>
</dbReference>
<dbReference type="GO" id="GO:0016705">
    <property type="term" value="F:oxidoreductase activity, acting on paired donors, with incorporation or reduction of molecular oxygen"/>
    <property type="evidence" value="ECO:0007669"/>
    <property type="project" value="InterPro"/>
</dbReference>
<dbReference type="GO" id="GO:0016132">
    <property type="term" value="P:brassinosteroid biosynthetic process"/>
    <property type="evidence" value="ECO:0007669"/>
    <property type="project" value="TreeGrafter"/>
</dbReference>
<dbReference type="GO" id="GO:0010268">
    <property type="term" value="P:brassinosteroid homeostasis"/>
    <property type="evidence" value="ECO:0007669"/>
    <property type="project" value="TreeGrafter"/>
</dbReference>
<dbReference type="GO" id="GO:0016125">
    <property type="term" value="P:sterol metabolic process"/>
    <property type="evidence" value="ECO:0007669"/>
    <property type="project" value="TreeGrafter"/>
</dbReference>
<dbReference type="CDD" id="cd11043">
    <property type="entry name" value="CYP90-like"/>
    <property type="match status" value="1"/>
</dbReference>
<dbReference type="Gene3D" id="1.10.630.10">
    <property type="entry name" value="Cytochrome P450"/>
    <property type="match status" value="1"/>
</dbReference>
<dbReference type="InterPro" id="IPR001128">
    <property type="entry name" value="Cyt_P450"/>
</dbReference>
<dbReference type="InterPro" id="IPR017972">
    <property type="entry name" value="Cyt_P450_CS"/>
</dbReference>
<dbReference type="InterPro" id="IPR002401">
    <property type="entry name" value="Cyt_P450_E_grp-I"/>
</dbReference>
<dbReference type="InterPro" id="IPR036396">
    <property type="entry name" value="Cyt_P450_sf"/>
</dbReference>
<dbReference type="PANTHER" id="PTHR24286">
    <property type="entry name" value="CYTOCHROME P450 26"/>
    <property type="match status" value="1"/>
</dbReference>
<dbReference type="PANTHER" id="PTHR24286:SF232">
    <property type="entry name" value="CYTOCHROME P450 SUPERFAMILY PROTEIN"/>
    <property type="match status" value="1"/>
</dbReference>
<dbReference type="Pfam" id="PF00067">
    <property type="entry name" value="p450"/>
    <property type="match status" value="1"/>
</dbReference>
<dbReference type="PRINTS" id="PR00463">
    <property type="entry name" value="EP450I"/>
</dbReference>
<dbReference type="PRINTS" id="PR00385">
    <property type="entry name" value="P450"/>
</dbReference>
<dbReference type="SUPFAM" id="SSF48264">
    <property type="entry name" value="Cytochrome P450"/>
    <property type="match status" value="1"/>
</dbReference>
<dbReference type="PROSITE" id="PS00086">
    <property type="entry name" value="CYTOCHROME_P450"/>
    <property type="match status" value="1"/>
</dbReference>
<sequence>MGSGIMTETLTDSWLVGLLCLVLGFLLLQLYKLVWGASSRAYKLPPGSTGWPLIGETISFFRGINSTAQPRQFIQEREQRYGEIFRSNLFGRSRIVVSVDPEFNKHVLQHEGRQFQANYPKPLRNLIGKYGLLSVHGDLQRKLHGAAVNLLRFERLSVDFMEDIQNLLHITLAKWEAKRDIHLQEECHQLVLNLMAKQLLDLSPSKDTEEICEAFGHFSEALLAVPIKIPGTKYARGFKAREFLIKKIYESIEDRRQHPEAVHNDLLTKLLKEDSFSEEIIADFILFLLFAGHETSSRSMSFAIKFLTDCPRALEELKAEHDALLKRKGNLKNQKLNWDDYQSLKFTQCVIHETLRVGNFGPGVFRETKEDIKTKGGFVIPRGWTVYVFLTGTHLDEKYHSSALKFDPWRWQPHLQDQELLKNPSFMPFGGGARLCPGMHLAKMELALFLHNFVTKFRWEALQDDKISYFPFPRLIKGLPIRLRLRE</sequence>
<comment type="cofactor">
    <cofactor evidence="1">
        <name>heme</name>
        <dbReference type="ChEBI" id="CHEBI:30413"/>
    </cofactor>
</comment>
<comment type="subcellular location">
    <subcellularLocation>
        <location evidence="3">Membrane</location>
        <topology evidence="3">Single-pass membrane protein</topology>
    </subcellularLocation>
</comment>
<comment type="similarity">
    <text evidence="3">Belongs to the cytochrome P450 family.</text>
</comment>
<accession>Q50EK5</accession>
<name>C72B2_PINTA</name>
<feature type="chain" id="PRO_0000352515" description="Cytochrome P450 720B2">
    <location>
        <begin position="1"/>
        <end position="487"/>
    </location>
</feature>
<feature type="transmembrane region" description="Helical" evidence="2">
    <location>
        <begin position="14"/>
        <end position="34"/>
    </location>
</feature>
<feature type="binding site" description="axial binding residue" evidence="1">
    <location>
        <position position="436"/>
    </location>
    <ligand>
        <name>heme</name>
        <dbReference type="ChEBI" id="CHEBI:30413"/>
    </ligand>
    <ligandPart>
        <name>Fe</name>
        <dbReference type="ChEBI" id="CHEBI:18248"/>
    </ligandPart>
</feature>
<protein>
    <recommendedName>
        <fullName>Cytochrome P450 720B2</fullName>
        <ecNumber>1.14.-.-</ecNumber>
    </recommendedName>
    <alternativeName>
        <fullName>Cytochrome P450 CYPB</fullName>
    </alternativeName>
</protein>
<gene>
    <name type="primary">CYP720B2</name>
</gene>
<proteinExistence type="evidence at transcript level"/>
<keyword id="KW-0349">Heme</keyword>
<keyword id="KW-0408">Iron</keyword>
<keyword id="KW-0472">Membrane</keyword>
<keyword id="KW-0479">Metal-binding</keyword>
<keyword id="KW-0503">Monooxygenase</keyword>
<keyword id="KW-0560">Oxidoreductase</keyword>
<keyword id="KW-0812">Transmembrane</keyword>
<keyword id="KW-1133">Transmembrane helix</keyword>